<reference key="1">
    <citation type="journal article" date="1998" name="Science">
        <title>Complete genome sequence of Treponema pallidum, the syphilis spirochete.</title>
        <authorList>
            <person name="Fraser C.M."/>
            <person name="Norris S.J."/>
            <person name="Weinstock G.M."/>
            <person name="White O."/>
            <person name="Sutton G.G."/>
            <person name="Dodson R.J."/>
            <person name="Gwinn M.L."/>
            <person name="Hickey E.K."/>
            <person name="Clayton R.A."/>
            <person name="Ketchum K.A."/>
            <person name="Sodergren E."/>
            <person name="Hardham J.M."/>
            <person name="McLeod M.P."/>
            <person name="Salzberg S.L."/>
            <person name="Peterson J.D."/>
            <person name="Khalak H.G."/>
            <person name="Richardson D.L."/>
            <person name="Howell J.K."/>
            <person name="Chidambaram M."/>
            <person name="Utterback T.R."/>
            <person name="McDonald L.A."/>
            <person name="Artiach P."/>
            <person name="Bowman C."/>
            <person name="Cotton M.D."/>
            <person name="Fujii C."/>
            <person name="Garland S.A."/>
            <person name="Hatch B."/>
            <person name="Horst K."/>
            <person name="Roberts K.M."/>
            <person name="Sandusky M."/>
            <person name="Weidman J.F."/>
            <person name="Smith H.O."/>
            <person name="Venter J.C."/>
        </authorList>
    </citation>
    <scope>NUCLEOTIDE SEQUENCE [LARGE SCALE GENOMIC DNA]</scope>
    <source>
        <strain>Nichols</strain>
    </source>
</reference>
<name>KTHY_TREPA</name>
<sequence length="208" mass="23948">MNILHNFVVFEGIDGTGTSTQLRALERHFQARKDMVFTQEPTGGEIGTLIRDVLQKRVIMSSKALGLLFAADRHEHLEGAGGINDCLAEGKIVLCDRYVFSSLVYQGMAVSGSFAYELNKEFPLPEVVFYFDAPIEVCVERITARGLQTELYEYTSFQEKARKGYETIFRKCRHLYPAMKVIEIDAREEIEVVHERILHHLREYRRLK</sequence>
<gene>
    <name type="primary">tmk</name>
    <name type="ordered locus">TP_0354</name>
</gene>
<comment type="catalytic activity">
    <reaction>
        <text>dTMP + ATP = dTDP + ADP</text>
        <dbReference type="Rhea" id="RHEA:13517"/>
        <dbReference type="ChEBI" id="CHEBI:30616"/>
        <dbReference type="ChEBI" id="CHEBI:58369"/>
        <dbReference type="ChEBI" id="CHEBI:63528"/>
        <dbReference type="ChEBI" id="CHEBI:456216"/>
        <dbReference type="EC" id="2.7.4.9"/>
    </reaction>
</comment>
<comment type="similarity">
    <text evidence="2">Belongs to the thymidylate kinase family.</text>
</comment>
<comment type="caution">
    <text evidence="2">Could be inactive due to a defective ATP-binding site.</text>
</comment>
<proteinExistence type="inferred from homology"/>
<feature type="chain" id="PRO_0000155363" description="Putative thymidylate kinase">
    <location>
        <begin position="1"/>
        <end position="208"/>
    </location>
</feature>
<feature type="region of interest" description="Defective ATP-binding" evidence="1">
    <location>
        <begin position="12"/>
        <end position="19"/>
    </location>
</feature>
<evidence type="ECO:0000255" key="1"/>
<evidence type="ECO:0000305" key="2"/>
<organism>
    <name type="scientific">Treponema pallidum (strain Nichols)</name>
    <dbReference type="NCBI Taxonomy" id="243276"/>
    <lineage>
        <taxon>Bacteria</taxon>
        <taxon>Pseudomonadati</taxon>
        <taxon>Spirochaetota</taxon>
        <taxon>Spirochaetia</taxon>
        <taxon>Spirochaetales</taxon>
        <taxon>Treponemataceae</taxon>
        <taxon>Treponema</taxon>
    </lineage>
</organism>
<protein>
    <recommendedName>
        <fullName>Putative thymidylate kinase</fullName>
        <ecNumber>2.7.4.9</ecNumber>
    </recommendedName>
    <alternativeName>
        <fullName>dTMP kinase</fullName>
    </alternativeName>
</protein>
<accession>O83373</accession>
<dbReference type="EC" id="2.7.4.9"/>
<dbReference type="EMBL" id="AE000520">
    <property type="protein sequence ID" value="AAC65341.1"/>
    <property type="molecule type" value="Genomic_DNA"/>
</dbReference>
<dbReference type="PIR" id="H71333">
    <property type="entry name" value="H71333"/>
</dbReference>
<dbReference type="RefSeq" id="WP_010881802.1">
    <property type="nucleotide sequence ID" value="NC_021490.2"/>
</dbReference>
<dbReference type="SMR" id="O83373"/>
<dbReference type="IntAct" id="O83373">
    <property type="interactions" value="11"/>
</dbReference>
<dbReference type="STRING" id="243276.TP_0354"/>
<dbReference type="EnsemblBacteria" id="AAC65341">
    <property type="protein sequence ID" value="AAC65341"/>
    <property type="gene ID" value="TP_0354"/>
</dbReference>
<dbReference type="GeneID" id="93876133"/>
<dbReference type="KEGG" id="tpa:TP_0354"/>
<dbReference type="KEGG" id="tpw:TPANIC_0354"/>
<dbReference type="eggNOG" id="COG0125">
    <property type="taxonomic scope" value="Bacteria"/>
</dbReference>
<dbReference type="HOGENOM" id="CLU_049131_1_3_12"/>
<dbReference type="OrthoDB" id="9774907at2"/>
<dbReference type="Proteomes" id="UP000000811">
    <property type="component" value="Chromosome"/>
</dbReference>
<dbReference type="GO" id="GO:0005737">
    <property type="term" value="C:cytoplasm"/>
    <property type="evidence" value="ECO:0007669"/>
    <property type="project" value="TreeGrafter"/>
</dbReference>
<dbReference type="GO" id="GO:0005524">
    <property type="term" value="F:ATP binding"/>
    <property type="evidence" value="ECO:0007669"/>
    <property type="project" value="UniProtKB-UniRule"/>
</dbReference>
<dbReference type="GO" id="GO:0004798">
    <property type="term" value="F:dTMP kinase activity"/>
    <property type="evidence" value="ECO:0007669"/>
    <property type="project" value="UniProtKB-UniRule"/>
</dbReference>
<dbReference type="GO" id="GO:0006233">
    <property type="term" value="P:dTDP biosynthetic process"/>
    <property type="evidence" value="ECO:0007669"/>
    <property type="project" value="InterPro"/>
</dbReference>
<dbReference type="GO" id="GO:0006235">
    <property type="term" value="P:dTTP biosynthetic process"/>
    <property type="evidence" value="ECO:0007669"/>
    <property type="project" value="UniProtKB-UniRule"/>
</dbReference>
<dbReference type="GO" id="GO:0006227">
    <property type="term" value="P:dUDP biosynthetic process"/>
    <property type="evidence" value="ECO:0007669"/>
    <property type="project" value="TreeGrafter"/>
</dbReference>
<dbReference type="CDD" id="cd01672">
    <property type="entry name" value="TMPK"/>
    <property type="match status" value="1"/>
</dbReference>
<dbReference type="Gene3D" id="3.40.50.300">
    <property type="entry name" value="P-loop containing nucleotide triphosphate hydrolases"/>
    <property type="match status" value="1"/>
</dbReference>
<dbReference type="HAMAP" id="MF_00165">
    <property type="entry name" value="Thymidylate_kinase"/>
    <property type="match status" value="1"/>
</dbReference>
<dbReference type="InterPro" id="IPR027417">
    <property type="entry name" value="P-loop_NTPase"/>
</dbReference>
<dbReference type="InterPro" id="IPR039430">
    <property type="entry name" value="Thymidylate_kin-like_dom"/>
</dbReference>
<dbReference type="InterPro" id="IPR018095">
    <property type="entry name" value="Thymidylate_kin_CS"/>
</dbReference>
<dbReference type="InterPro" id="IPR018094">
    <property type="entry name" value="Thymidylate_kinase"/>
</dbReference>
<dbReference type="NCBIfam" id="TIGR00041">
    <property type="entry name" value="DTMP_kinase"/>
    <property type="match status" value="1"/>
</dbReference>
<dbReference type="PANTHER" id="PTHR10344">
    <property type="entry name" value="THYMIDYLATE KINASE"/>
    <property type="match status" value="1"/>
</dbReference>
<dbReference type="PANTHER" id="PTHR10344:SF4">
    <property type="entry name" value="UMP-CMP KINASE 2, MITOCHONDRIAL"/>
    <property type="match status" value="1"/>
</dbReference>
<dbReference type="Pfam" id="PF02223">
    <property type="entry name" value="Thymidylate_kin"/>
    <property type="match status" value="1"/>
</dbReference>
<dbReference type="SUPFAM" id="SSF52540">
    <property type="entry name" value="P-loop containing nucleoside triphosphate hydrolases"/>
    <property type="match status" value="1"/>
</dbReference>
<dbReference type="PROSITE" id="PS01331">
    <property type="entry name" value="THYMIDYLATE_KINASE"/>
    <property type="match status" value="1"/>
</dbReference>
<keyword id="KW-0067">ATP-binding</keyword>
<keyword id="KW-0418">Kinase</keyword>
<keyword id="KW-0545">Nucleotide biosynthesis</keyword>
<keyword id="KW-0547">Nucleotide-binding</keyword>
<keyword id="KW-1185">Reference proteome</keyword>
<keyword id="KW-0808">Transferase</keyword>